<sequence length="264" mass="29507">MAATGEALTPQGYIQHHLTNLSVGEGFWTWHIDSLFFSVGLGVLFLWLFRSVGKKATTGVPGKLQCFVEMIVEFVDSSVKETFHGRNPVIAPLALTIFVWVFMMNFMDMVPVDWIPELAMAAGIPYMKVVPTTDLNITFSMAIGVFLLIIYYSIKVKGISGFVKELTLQPFNHKAMIPVNLLLETVTLIAKPISLALRLFGNLYAGELIFILIALMYGANWALSTLGVTLQLGWLIFHILVITLQAFIFMMLTIVYLSMAHEDH</sequence>
<feature type="chain" id="PRO_0000362463" description="ATP synthase subunit a">
    <location>
        <begin position="1"/>
        <end position="264"/>
    </location>
</feature>
<feature type="transmembrane region" description="Helical" evidence="1">
    <location>
        <begin position="29"/>
        <end position="49"/>
    </location>
</feature>
<feature type="transmembrane region" description="Helical" evidence="1">
    <location>
        <begin position="89"/>
        <end position="109"/>
    </location>
</feature>
<feature type="transmembrane region" description="Helical" evidence="1">
    <location>
        <begin position="134"/>
        <end position="154"/>
    </location>
</feature>
<feature type="transmembrane region" description="Helical" evidence="1">
    <location>
        <begin position="177"/>
        <end position="197"/>
    </location>
</feature>
<feature type="transmembrane region" description="Helical" evidence="1">
    <location>
        <begin position="208"/>
        <end position="228"/>
    </location>
</feature>
<feature type="transmembrane region" description="Helical" evidence="1">
    <location>
        <begin position="235"/>
        <end position="255"/>
    </location>
</feature>
<gene>
    <name evidence="1" type="primary">atpB</name>
    <name type="ordered locus">Swoo_4904</name>
</gene>
<keyword id="KW-0066">ATP synthesis</keyword>
<keyword id="KW-0997">Cell inner membrane</keyword>
<keyword id="KW-1003">Cell membrane</keyword>
<keyword id="KW-0138">CF(0)</keyword>
<keyword id="KW-0375">Hydrogen ion transport</keyword>
<keyword id="KW-0406">Ion transport</keyword>
<keyword id="KW-0472">Membrane</keyword>
<keyword id="KW-1185">Reference proteome</keyword>
<keyword id="KW-0812">Transmembrane</keyword>
<keyword id="KW-1133">Transmembrane helix</keyword>
<keyword id="KW-0813">Transport</keyword>
<organism>
    <name type="scientific">Shewanella woodyi (strain ATCC 51908 / MS32)</name>
    <dbReference type="NCBI Taxonomy" id="392500"/>
    <lineage>
        <taxon>Bacteria</taxon>
        <taxon>Pseudomonadati</taxon>
        <taxon>Pseudomonadota</taxon>
        <taxon>Gammaproteobacteria</taxon>
        <taxon>Alteromonadales</taxon>
        <taxon>Shewanellaceae</taxon>
        <taxon>Shewanella</taxon>
    </lineage>
</organism>
<comment type="function">
    <text evidence="1">Key component of the proton channel; it plays a direct role in the translocation of protons across the membrane.</text>
</comment>
<comment type="subunit">
    <text evidence="1">F-type ATPases have 2 components, CF(1) - the catalytic core - and CF(0) - the membrane proton channel. CF(1) has five subunits: alpha(3), beta(3), gamma(1), delta(1), epsilon(1). CF(0) has three main subunits: a(1), b(2) and c(9-12). The alpha and beta chains form an alternating ring which encloses part of the gamma chain. CF(1) is attached to CF(0) by a central stalk formed by the gamma and epsilon chains, while a peripheral stalk is formed by the delta and b chains.</text>
</comment>
<comment type="subcellular location">
    <subcellularLocation>
        <location evidence="1">Cell inner membrane</location>
        <topology evidence="1">Multi-pass membrane protein</topology>
    </subcellularLocation>
</comment>
<comment type="similarity">
    <text evidence="1">Belongs to the ATPase A chain family.</text>
</comment>
<reference key="1">
    <citation type="submission" date="2008-02" db="EMBL/GenBank/DDBJ databases">
        <title>Complete sequence of Shewanella woodyi ATCC 51908.</title>
        <authorList>
            <consortium name="US DOE Joint Genome Institute"/>
            <person name="Copeland A."/>
            <person name="Lucas S."/>
            <person name="Lapidus A."/>
            <person name="Glavina del Rio T."/>
            <person name="Dalin E."/>
            <person name="Tice H."/>
            <person name="Bruce D."/>
            <person name="Goodwin L."/>
            <person name="Pitluck S."/>
            <person name="Sims D."/>
            <person name="Brettin T."/>
            <person name="Detter J.C."/>
            <person name="Han C."/>
            <person name="Kuske C.R."/>
            <person name="Schmutz J."/>
            <person name="Larimer F."/>
            <person name="Land M."/>
            <person name="Hauser L."/>
            <person name="Kyrpides N."/>
            <person name="Lykidis A."/>
            <person name="Zhao J.-S."/>
            <person name="Richardson P."/>
        </authorList>
    </citation>
    <scope>NUCLEOTIDE SEQUENCE [LARGE SCALE GENOMIC DNA]</scope>
    <source>
        <strain>ATCC 51908 / MS32</strain>
    </source>
</reference>
<dbReference type="EMBL" id="CP000961">
    <property type="protein sequence ID" value="ACA89153.1"/>
    <property type="molecule type" value="Genomic_DNA"/>
</dbReference>
<dbReference type="RefSeq" id="WP_012327469.1">
    <property type="nucleotide sequence ID" value="NC_010506.1"/>
</dbReference>
<dbReference type="SMR" id="B1KQ40"/>
<dbReference type="STRING" id="392500.Swoo_4904"/>
<dbReference type="KEGG" id="swd:Swoo_4904"/>
<dbReference type="eggNOG" id="COG0356">
    <property type="taxonomic scope" value="Bacteria"/>
</dbReference>
<dbReference type="HOGENOM" id="CLU_041018_1_0_6"/>
<dbReference type="Proteomes" id="UP000002168">
    <property type="component" value="Chromosome"/>
</dbReference>
<dbReference type="GO" id="GO:0005886">
    <property type="term" value="C:plasma membrane"/>
    <property type="evidence" value="ECO:0007669"/>
    <property type="project" value="UniProtKB-SubCell"/>
</dbReference>
<dbReference type="GO" id="GO:0045259">
    <property type="term" value="C:proton-transporting ATP synthase complex"/>
    <property type="evidence" value="ECO:0007669"/>
    <property type="project" value="UniProtKB-KW"/>
</dbReference>
<dbReference type="GO" id="GO:0046933">
    <property type="term" value="F:proton-transporting ATP synthase activity, rotational mechanism"/>
    <property type="evidence" value="ECO:0007669"/>
    <property type="project" value="UniProtKB-UniRule"/>
</dbReference>
<dbReference type="GO" id="GO:0042777">
    <property type="term" value="P:proton motive force-driven plasma membrane ATP synthesis"/>
    <property type="evidence" value="ECO:0007669"/>
    <property type="project" value="TreeGrafter"/>
</dbReference>
<dbReference type="CDD" id="cd00310">
    <property type="entry name" value="ATP-synt_Fo_a_6"/>
    <property type="match status" value="1"/>
</dbReference>
<dbReference type="FunFam" id="1.20.120.220:FF:000002">
    <property type="entry name" value="ATP synthase subunit a"/>
    <property type="match status" value="1"/>
</dbReference>
<dbReference type="Gene3D" id="1.20.120.220">
    <property type="entry name" value="ATP synthase, F0 complex, subunit A"/>
    <property type="match status" value="1"/>
</dbReference>
<dbReference type="HAMAP" id="MF_01393">
    <property type="entry name" value="ATP_synth_a_bact"/>
    <property type="match status" value="1"/>
</dbReference>
<dbReference type="InterPro" id="IPR045082">
    <property type="entry name" value="ATP_syn_F0_a_bact/chloroplast"/>
</dbReference>
<dbReference type="InterPro" id="IPR000568">
    <property type="entry name" value="ATP_synth_F0_asu"/>
</dbReference>
<dbReference type="InterPro" id="IPR023011">
    <property type="entry name" value="ATP_synth_F0_asu_AS"/>
</dbReference>
<dbReference type="InterPro" id="IPR035908">
    <property type="entry name" value="F0_ATP_A_sf"/>
</dbReference>
<dbReference type="NCBIfam" id="TIGR01131">
    <property type="entry name" value="ATP_synt_6_or_A"/>
    <property type="match status" value="1"/>
</dbReference>
<dbReference type="NCBIfam" id="NF004477">
    <property type="entry name" value="PRK05815.1-1"/>
    <property type="match status" value="1"/>
</dbReference>
<dbReference type="PANTHER" id="PTHR42823">
    <property type="entry name" value="ATP SYNTHASE SUBUNIT A, CHLOROPLASTIC"/>
    <property type="match status" value="1"/>
</dbReference>
<dbReference type="PANTHER" id="PTHR42823:SF3">
    <property type="entry name" value="ATP SYNTHASE SUBUNIT A, CHLOROPLASTIC"/>
    <property type="match status" value="1"/>
</dbReference>
<dbReference type="Pfam" id="PF00119">
    <property type="entry name" value="ATP-synt_A"/>
    <property type="match status" value="1"/>
</dbReference>
<dbReference type="PRINTS" id="PR00123">
    <property type="entry name" value="ATPASEA"/>
</dbReference>
<dbReference type="SUPFAM" id="SSF81336">
    <property type="entry name" value="F1F0 ATP synthase subunit A"/>
    <property type="match status" value="1"/>
</dbReference>
<dbReference type="PROSITE" id="PS00449">
    <property type="entry name" value="ATPASE_A"/>
    <property type="match status" value="1"/>
</dbReference>
<accession>B1KQ40</accession>
<protein>
    <recommendedName>
        <fullName evidence="1">ATP synthase subunit a</fullName>
    </recommendedName>
    <alternativeName>
        <fullName evidence="1">ATP synthase F0 sector subunit a</fullName>
    </alternativeName>
    <alternativeName>
        <fullName evidence="1">F-ATPase subunit 6</fullName>
    </alternativeName>
</protein>
<proteinExistence type="inferred from homology"/>
<name>ATP6_SHEWM</name>
<evidence type="ECO:0000255" key="1">
    <source>
        <dbReference type="HAMAP-Rule" id="MF_01393"/>
    </source>
</evidence>